<feature type="chain" id="PRO_0000303016" description="Elongation factor 1-alpha 3">
    <location>
        <begin position="1"/>
        <end position="460"/>
    </location>
</feature>
<feature type="domain" description="tr-type G">
    <location>
        <begin position="6"/>
        <end position="243"/>
    </location>
</feature>
<feature type="region of interest" description="G1" evidence="1">
    <location>
        <begin position="15"/>
        <end position="22"/>
    </location>
</feature>
<feature type="region of interest" description="G2" evidence="1">
    <location>
        <begin position="71"/>
        <end position="75"/>
    </location>
</feature>
<feature type="region of interest" description="G3" evidence="1">
    <location>
        <begin position="92"/>
        <end position="95"/>
    </location>
</feature>
<feature type="region of interest" description="G4" evidence="1">
    <location>
        <begin position="154"/>
        <end position="157"/>
    </location>
</feature>
<feature type="region of interest" description="G5" evidence="1">
    <location>
        <begin position="195"/>
        <end position="197"/>
    </location>
</feature>
<feature type="modified residue" description="5-glutamyl glycerylphosphorylethanolamine" evidence="1">
    <location>
        <position position="302"/>
    </location>
</feature>
<feature type="modified residue" description="5-glutamyl glycerylphosphorylethanolamine" evidence="1">
    <location>
        <position position="375"/>
    </location>
</feature>
<dbReference type="EMBL" id="AY928340">
    <property type="protein sequence ID" value="AAY17224.1"/>
    <property type="molecule type" value="Genomic_DNA"/>
</dbReference>
<dbReference type="SMR" id="Q2HJN6"/>
<dbReference type="GO" id="GO:0005737">
    <property type="term" value="C:cytoplasm"/>
    <property type="evidence" value="ECO:0007669"/>
    <property type="project" value="UniProtKB-SubCell"/>
</dbReference>
<dbReference type="GO" id="GO:0005525">
    <property type="term" value="F:GTP binding"/>
    <property type="evidence" value="ECO:0007669"/>
    <property type="project" value="UniProtKB-KW"/>
</dbReference>
<dbReference type="GO" id="GO:0003924">
    <property type="term" value="F:GTPase activity"/>
    <property type="evidence" value="ECO:0007669"/>
    <property type="project" value="InterPro"/>
</dbReference>
<dbReference type="GO" id="GO:0003746">
    <property type="term" value="F:translation elongation factor activity"/>
    <property type="evidence" value="ECO:0007669"/>
    <property type="project" value="UniProtKB-KW"/>
</dbReference>
<dbReference type="CDD" id="cd01883">
    <property type="entry name" value="EF1_alpha"/>
    <property type="match status" value="1"/>
</dbReference>
<dbReference type="CDD" id="cd03693">
    <property type="entry name" value="EF1_alpha_II"/>
    <property type="match status" value="1"/>
</dbReference>
<dbReference type="CDD" id="cd03705">
    <property type="entry name" value="EF1_alpha_III"/>
    <property type="match status" value="1"/>
</dbReference>
<dbReference type="FunFam" id="2.40.30.10:FF:000003">
    <property type="entry name" value="Elongation factor 1-alpha"/>
    <property type="match status" value="1"/>
</dbReference>
<dbReference type="FunFam" id="2.40.30.10:FF:000005">
    <property type="entry name" value="Elongation factor 1-alpha"/>
    <property type="match status" value="1"/>
</dbReference>
<dbReference type="FunFam" id="3.40.50.300:FF:000090">
    <property type="entry name" value="Elongation factor 1-alpha"/>
    <property type="match status" value="1"/>
</dbReference>
<dbReference type="Gene3D" id="3.40.50.300">
    <property type="entry name" value="P-loop containing nucleotide triphosphate hydrolases"/>
    <property type="match status" value="1"/>
</dbReference>
<dbReference type="Gene3D" id="2.40.30.10">
    <property type="entry name" value="Translation factors"/>
    <property type="match status" value="2"/>
</dbReference>
<dbReference type="HAMAP" id="MF_00118_A">
    <property type="entry name" value="EF_Tu_A"/>
    <property type="match status" value="1"/>
</dbReference>
<dbReference type="InterPro" id="IPR004161">
    <property type="entry name" value="EFTu-like_2"/>
</dbReference>
<dbReference type="InterPro" id="IPR031157">
    <property type="entry name" value="G_TR_CS"/>
</dbReference>
<dbReference type="InterPro" id="IPR054696">
    <property type="entry name" value="GTP-eEF1A_C"/>
</dbReference>
<dbReference type="InterPro" id="IPR027417">
    <property type="entry name" value="P-loop_NTPase"/>
</dbReference>
<dbReference type="InterPro" id="IPR000795">
    <property type="entry name" value="T_Tr_GTP-bd_dom"/>
</dbReference>
<dbReference type="InterPro" id="IPR050100">
    <property type="entry name" value="TRAFAC_GTPase_members"/>
</dbReference>
<dbReference type="InterPro" id="IPR009000">
    <property type="entry name" value="Transl_B-barrel_sf"/>
</dbReference>
<dbReference type="InterPro" id="IPR009001">
    <property type="entry name" value="Transl_elong_EF1A/Init_IF2_C"/>
</dbReference>
<dbReference type="InterPro" id="IPR004539">
    <property type="entry name" value="Transl_elong_EF1A_euk/arc"/>
</dbReference>
<dbReference type="NCBIfam" id="TIGR00483">
    <property type="entry name" value="EF-1_alpha"/>
    <property type="match status" value="1"/>
</dbReference>
<dbReference type="NCBIfam" id="NF008969">
    <property type="entry name" value="PRK12317.1"/>
    <property type="match status" value="1"/>
</dbReference>
<dbReference type="PANTHER" id="PTHR23115">
    <property type="entry name" value="TRANSLATION FACTOR"/>
    <property type="match status" value="1"/>
</dbReference>
<dbReference type="Pfam" id="PF22594">
    <property type="entry name" value="GTP-eEF1A_C"/>
    <property type="match status" value="1"/>
</dbReference>
<dbReference type="Pfam" id="PF00009">
    <property type="entry name" value="GTP_EFTU"/>
    <property type="match status" value="1"/>
</dbReference>
<dbReference type="Pfam" id="PF03144">
    <property type="entry name" value="GTP_EFTU_D2"/>
    <property type="match status" value="1"/>
</dbReference>
<dbReference type="PRINTS" id="PR00315">
    <property type="entry name" value="ELONGATNFCT"/>
</dbReference>
<dbReference type="SUPFAM" id="SSF50465">
    <property type="entry name" value="EF-Tu/eEF-1alpha/eIF2-gamma C-terminal domain"/>
    <property type="match status" value="1"/>
</dbReference>
<dbReference type="SUPFAM" id="SSF52540">
    <property type="entry name" value="P-loop containing nucleoside triphosphate hydrolases"/>
    <property type="match status" value="1"/>
</dbReference>
<dbReference type="SUPFAM" id="SSF50447">
    <property type="entry name" value="Translation proteins"/>
    <property type="match status" value="1"/>
</dbReference>
<dbReference type="PROSITE" id="PS00301">
    <property type="entry name" value="G_TR_1"/>
    <property type="match status" value="1"/>
</dbReference>
<dbReference type="PROSITE" id="PS51722">
    <property type="entry name" value="G_TR_2"/>
    <property type="match status" value="1"/>
</dbReference>
<name>EF1A3_OSCTI</name>
<reference key="1">
    <citation type="submission" date="2005-02" db="EMBL/GenBank/DDBJ databases">
        <title>Four eEF1A genes from a Rhabditid nematode.</title>
        <authorList>
            <person name="Akamine R.N."/>
            <person name="Winter C.E."/>
        </authorList>
    </citation>
    <scope>NUCLEOTIDE SEQUENCE [GENOMIC DNA]</scope>
    <source>
        <strain>CEW1</strain>
    </source>
</reference>
<proteinExistence type="inferred from homology"/>
<gene>
    <name type="primary">eft-3</name>
</gene>
<keyword id="KW-0963">Cytoplasm</keyword>
<keyword id="KW-0251">Elongation factor</keyword>
<keyword id="KW-0342">GTP-binding</keyword>
<keyword id="KW-0547">Nucleotide-binding</keyword>
<keyword id="KW-0597">Phosphoprotein</keyword>
<keyword id="KW-0648">Protein biosynthesis</keyword>
<evidence type="ECO:0000250" key="1"/>
<evidence type="ECO:0000305" key="2"/>
<organism>
    <name type="scientific">Oscheius tipulae</name>
    <dbReference type="NCBI Taxonomy" id="141969"/>
    <lineage>
        <taxon>Eukaryota</taxon>
        <taxon>Metazoa</taxon>
        <taxon>Ecdysozoa</taxon>
        <taxon>Nematoda</taxon>
        <taxon>Chromadorea</taxon>
        <taxon>Rhabditida</taxon>
        <taxon>Rhabditina</taxon>
        <taxon>Rhabditomorpha</taxon>
        <taxon>Rhabditoidea</taxon>
        <taxon>Rhabditidae</taxon>
        <taxon>Rhabditinae</taxon>
        <taxon>Oscheius</taxon>
    </lineage>
</organism>
<comment type="function">
    <text evidence="1">This protein promotes the GTP-dependent binding of aminoacyl-tRNA to the A-site of ribosomes during protein biosynthesis.</text>
</comment>
<comment type="subcellular location">
    <subcellularLocation>
        <location evidence="1">Cytoplasm</location>
    </subcellularLocation>
</comment>
<comment type="similarity">
    <text evidence="2">Belongs to the TRAFAC class translation factor GTPase superfamily. Classic translation factor GTPase family. EF-Tu/EF-1A subfamily.</text>
</comment>
<protein>
    <recommendedName>
        <fullName>Elongation factor 1-alpha 3</fullName>
        <shortName>EF-1-alpha-3</shortName>
    </recommendedName>
</protein>
<accession>Q2HJN6</accession>
<sequence>MGKGDKTHINIVVIGHVDSGKSTTTGHLIYKCGGIDKRTIEKFEKEAQEMGKGSFKYAWVLDKLKAERERGITIDIALWKFETAKFYVTIIDAPGHRDFIKNMITGTSQADCAVLVVACGTGEFEAGISKNGQTREHALLAQTLGVKQMIVACNKMDSTEPPFSEKRFDEIVTEVKSFLKKVGYNPATIPFVPISGFNGDNMLEPSSNMSWYKGWSVERKEGNASGKTLIEALDCIIPPQRPTDRPLRLPLQDVYKIGGIGTVPVGRVETGVIKPGMVVTFAPQNVTTEVKSVEMHHESLPEASPGDNVGFNVKNVSVKDIRRGSVCSDSKNDPAKESKNFTAQVIVMNHPGQISAGYTPVLDCHTAHIACKFAELKEKVDRRTGKSTEASPKFLKSGDAGIVELIPTKPPCVESFTDYAPLGRFAVRDMRQTVAVGVIKSVTKDDGSGGKVTKSAAKKK</sequence>